<sequence length="271" mass="28574">MSSPLAPVGIFDSGVGGLTVARAIIDQLPDEDIVYVGDTGNGPYGPLTIPEVRAHALAIGDDLVGRGVKALVIACNTASAACLRDARERYDVPVVEVILPAVRRAVATTRNGRIGVIGTRATITSHAYQDAFAAARDTEITAVACPRFVDFVERGVTSGRQVLGLAEGYLEPLQRSGVDTLVLGCTHYPLLSGLIQLVMGDNVTLVSSAEETAKEVLRVLTERDILRPHDAPPATRLFEATGDPEAFMALAARFLGPALTGVQPVRPSGMH</sequence>
<gene>
    <name evidence="1" type="primary">murI</name>
    <name type="ordered locus">MUL_3925</name>
</gene>
<comment type="function">
    <text evidence="1">Provides the (R)-glutamate required for cell wall biosynthesis.</text>
</comment>
<comment type="catalytic activity">
    <reaction evidence="1">
        <text>L-glutamate = D-glutamate</text>
        <dbReference type="Rhea" id="RHEA:12813"/>
        <dbReference type="ChEBI" id="CHEBI:29985"/>
        <dbReference type="ChEBI" id="CHEBI:29986"/>
        <dbReference type="EC" id="5.1.1.3"/>
    </reaction>
</comment>
<comment type="pathway">
    <text evidence="1">Cell wall biogenesis; peptidoglycan biosynthesis.</text>
</comment>
<comment type="similarity">
    <text evidence="1">Belongs to the aspartate/glutamate racemases family.</text>
</comment>
<evidence type="ECO:0000255" key="1">
    <source>
        <dbReference type="HAMAP-Rule" id="MF_00258"/>
    </source>
</evidence>
<organism>
    <name type="scientific">Mycobacterium ulcerans (strain Agy99)</name>
    <dbReference type="NCBI Taxonomy" id="362242"/>
    <lineage>
        <taxon>Bacteria</taxon>
        <taxon>Bacillati</taxon>
        <taxon>Actinomycetota</taxon>
        <taxon>Actinomycetes</taxon>
        <taxon>Mycobacteriales</taxon>
        <taxon>Mycobacteriaceae</taxon>
        <taxon>Mycobacterium</taxon>
        <taxon>Mycobacterium ulcerans group</taxon>
    </lineage>
</organism>
<protein>
    <recommendedName>
        <fullName evidence="1">Glutamate racemase</fullName>
        <ecNumber evidence="1">5.1.1.3</ecNumber>
    </recommendedName>
</protein>
<accession>A0PUH6</accession>
<keyword id="KW-0133">Cell shape</keyword>
<keyword id="KW-0961">Cell wall biogenesis/degradation</keyword>
<keyword id="KW-0413">Isomerase</keyword>
<keyword id="KW-0573">Peptidoglycan synthesis</keyword>
<reference key="1">
    <citation type="journal article" date="2007" name="Genome Res.">
        <title>Reductive evolution and niche adaptation inferred from the genome of Mycobacterium ulcerans, the causative agent of Buruli ulcer.</title>
        <authorList>
            <person name="Stinear T.P."/>
            <person name="Seemann T."/>
            <person name="Pidot S."/>
            <person name="Frigui W."/>
            <person name="Reysset G."/>
            <person name="Garnier T."/>
            <person name="Meurice G."/>
            <person name="Simon D."/>
            <person name="Bouchier C."/>
            <person name="Ma L."/>
            <person name="Tichit M."/>
            <person name="Porter J.L."/>
            <person name="Ryan J."/>
            <person name="Johnson P.D.R."/>
            <person name="Davies J.K."/>
            <person name="Jenkin G.A."/>
            <person name="Small P.L.C."/>
            <person name="Jones L.M."/>
            <person name="Tekaia F."/>
            <person name="Laval F."/>
            <person name="Daffe M."/>
            <person name="Parkhill J."/>
            <person name="Cole S.T."/>
        </authorList>
    </citation>
    <scope>NUCLEOTIDE SEQUENCE [LARGE SCALE GENOMIC DNA]</scope>
    <source>
        <strain>Agy99</strain>
    </source>
</reference>
<name>MURI_MYCUA</name>
<feature type="chain" id="PRO_1000047588" description="Glutamate racemase">
    <location>
        <begin position="1"/>
        <end position="271"/>
    </location>
</feature>
<feature type="active site" description="Proton donor/acceptor" evidence="1">
    <location>
        <position position="75"/>
    </location>
</feature>
<feature type="active site" description="Proton donor/acceptor" evidence="1">
    <location>
        <position position="185"/>
    </location>
</feature>
<feature type="binding site" evidence="1">
    <location>
        <begin position="12"/>
        <end position="13"/>
    </location>
    <ligand>
        <name>substrate</name>
    </ligand>
</feature>
<feature type="binding site" evidence="1">
    <location>
        <begin position="44"/>
        <end position="45"/>
    </location>
    <ligand>
        <name>substrate</name>
    </ligand>
</feature>
<feature type="binding site" evidence="1">
    <location>
        <begin position="76"/>
        <end position="77"/>
    </location>
    <ligand>
        <name>substrate</name>
    </ligand>
</feature>
<feature type="binding site" evidence="1">
    <location>
        <begin position="186"/>
        <end position="187"/>
    </location>
    <ligand>
        <name>substrate</name>
    </ligand>
</feature>
<dbReference type="EC" id="5.1.1.3" evidence="1"/>
<dbReference type="EMBL" id="CP000325">
    <property type="protein sequence ID" value="ABL05995.1"/>
    <property type="molecule type" value="Genomic_DNA"/>
</dbReference>
<dbReference type="RefSeq" id="WP_011741600.1">
    <property type="nucleotide sequence ID" value="NC_008611.1"/>
</dbReference>
<dbReference type="SMR" id="A0PUH6"/>
<dbReference type="GeneID" id="34341495"/>
<dbReference type="KEGG" id="mul:MUL_3925"/>
<dbReference type="eggNOG" id="COG0796">
    <property type="taxonomic scope" value="Bacteria"/>
</dbReference>
<dbReference type="HOGENOM" id="CLU_052344_0_1_11"/>
<dbReference type="UniPathway" id="UPA00219"/>
<dbReference type="Proteomes" id="UP000000765">
    <property type="component" value="Chromosome"/>
</dbReference>
<dbReference type="GO" id="GO:0008881">
    <property type="term" value="F:glutamate racemase activity"/>
    <property type="evidence" value="ECO:0007669"/>
    <property type="project" value="UniProtKB-UniRule"/>
</dbReference>
<dbReference type="GO" id="GO:0071555">
    <property type="term" value="P:cell wall organization"/>
    <property type="evidence" value="ECO:0007669"/>
    <property type="project" value="UniProtKB-KW"/>
</dbReference>
<dbReference type="GO" id="GO:0009252">
    <property type="term" value="P:peptidoglycan biosynthetic process"/>
    <property type="evidence" value="ECO:0007669"/>
    <property type="project" value="UniProtKB-UniRule"/>
</dbReference>
<dbReference type="GO" id="GO:0008360">
    <property type="term" value="P:regulation of cell shape"/>
    <property type="evidence" value="ECO:0007669"/>
    <property type="project" value="UniProtKB-KW"/>
</dbReference>
<dbReference type="FunFam" id="3.40.50.1860:FF:000001">
    <property type="entry name" value="Glutamate racemase"/>
    <property type="match status" value="1"/>
</dbReference>
<dbReference type="Gene3D" id="3.40.50.1860">
    <property type="match status" value="2"/>
</dbReference>
<dbReference type="HAMAP" id="MF_00258">
    <property type="entry name" value="Glu_racemase"/>
    <property type="match status" value="1"/>
</dbReference>
<dbReference type="InterPro" id="IPR015942">
    <property type="entry name" value="Asp/Glu/hydantoin_racemase"/>
</dbReference>
<dbReference type="InterPro" id="IPR001920">
    <property type="entry name" value="Asp/Glu_race"/>
</dbReference>
<dbReference type="InterPro" id="IPR018187">
    <property type="entry name" value="Asp/Glu_racemase_AS_1"/>
</dbReference>
<dbReference type="InterPro" id="IPR033134">
    <property type="entry name" value="Asp/Glu_racemase_AS_2"/>
</dbReference>
<dbReference type="InterPro" id="IPR004391">
    <property type="entry name" value="Glu_race"/>
</dbReference>
<dbReference type="NCBIfam" id="TIGR00067">
    <property type="entry name" value="glut_race"/>
    <property type="match status" value="1"/>
</dbReference>
<dbReference type="PANTHER" id="PTHR21198">
    <property type="entry name" value="GLUTAMATE RACEMASE"/>
    <property type="match status" value="1"/>
</dbReference>
<dbReference type="PANTHER" id="PTHR21198:SF2">
    <property type="entry name" value="GLUTAMATE RACEMASE"/>
    <property type="match status" value="1"/>
</dbReference>
<dbReference type="Pfam" id="PF01177">
    <property type="entry name" value="Asp_Glu_race"/>
    <property type="match status" value="1"/>
</dbReference>
<dbReference type="SUPFAM" id="SSF53681">
    <property type="entry name" value="Aspartate/glutamate racemase"/>
    <property type="match status" value="2"/>
</dbReference>
<dbReference type="PROSITE" id="PS00923">
    <property type="entry name" value="ASP_GLU_RACEMASE_1"/>
    <property type="match status" value="1"/>
</dbReference>
<dbReference type="PROSITE" id="PS00924">
    <property type="entry name" value="ASP_GLU_RACEMASE_2"/>
    <property type="match status" value="1"/>
</dbReference>
<proteinExistence type="inferred from homology"/>